<reference key="1">
    <citation type="submission" date="2006-11" db="EMBL/GenBank/DDBJ databases">
        <title>Identification and characterization of a new conjugation/ type IVA secretion system (trb/tra) of L. pneumophila Corby localized on a mobile genomic island.</title>
        <authorList>
            <person name="Gloeckner G."/>
            <person name="Albert-Weissenberger C."/>
            <person name="Weinmann E."/>
            <person name="Jacobi S."/>
            <person name="Schunder E."/>
            <person name="Steinert M."/>
            <person name="Buchrieser C."/>
            <person name="Hacker J."/>
            <person name="Heuner K."/>
        </authorList>
    </citation>
    <scope>NUCLEOTIDE SEQUENCE [LARGE SCALE GENOMIC DNA]</scope>
    <source>
        <strain>Corby</strain>
    </source>
</reference>
<accession>A5IEA7</accession>
<dbReference type="EC" id="1.1.1.94" evidence="1"/>
<dbReference type="EMBL" id="CP000675">
    <property type="protein sequence ID" value="ABQ55707.1"/>
    <property type="molecule type" value="Genomic_DNA"/>
</dbReference>
<dbReference type="RefSeq" id="WP_011947153.1">
    <property type="nucleotide sequence ID" value="NC_009494.2"/>
</dbReference>
<dbReference type="SMR" id="A5IEA7"/>
<dbReference type="KEGG" id="lpc:LPC_1774"/>
<dbReference type="HOGENOM" id="CLU_033449_0_2_6"/>
<dbReference type="UniPathway" id="UPA00940"/>
<dbReference type="GO" id="GO:0005829">
    <property type="term" value="C:cytosol"/>
    <property type="evidence" value="ECO:0007669"/>
    <property type="project" value="TreeGrafter"/>
</dbReference>
<dbReference type="GO" id="GO:0047952">
    <property type="term" value="F:glycerol-3-phosphate dehydrogenase [NAD(P)+] activity"/>
    <property type="evidence" value="ECO:0007669"/>
    <property type="project" value="UniProtKB-UniRule"/>
</dbReference>
<dbReference type="GO" id="GO:0051287">
    <property type="term" value="F:NAD binding"/>
    <property type="evidence" value="ECO:0007669"/>
    <property type="project" value="InterPro"/>
</dbReference>
<dbReference type="GO" id="GO:0005975">
    <property type="term" value="P:carbohydrate metabolic process"/>
    <property type="evidence" value="ECO:0007669"/>
    <property type="project" value="InterPro"/>
</dbReference>
<dbReference type="GO" id="GO:0046167">
    <property type="term" value="P:glycerol-3-phosphate biosynthetic process"/>
    <property type="evidence" value="ECO:0007669"/>
    <property type="project" value="UniProtKB-UniRule"/>
</dbReference>
<dbReference type="GO" id="GO:0046168">
    <property type="term" value="P:glycerol-3-phosphate catabolic process"/>
    <property type="evidence" value="ECO:0007669"/>
    <property type="project" value="InterPro"/>
</dbReference>
<dbReference type="GO" id="GO:0046474">
    <property type="term" value="P:glycerophospholipid biosynthetic process"/>
    <property type="evidence" value="ECO:0007669"/>
    <property type="project" value="TreeGrafter"/>
</dbReference>
<dbReference type="FunFam" id="1.10.1040.10:FF:000001">
    <property type="entry name" value="Glycerol-3-phosphate dehydrogenase [NAD(P)+]"/>
    <property type="match status" value="1"/>
</dbReference>
<dbReference type="FunFam" id="3.40.50.720:FF:000019">
    <property type="entry name" value="Glycerol-3-phosphate dehydrogenase [NAD(P)+]"/>
    <property type="match status" value="1"/>
</dbReference>
<dbReference type="Gene3D" id="1.10.1040.10">
    <property type="entry name" value="N-(1-d-carboxylethyl)-l-norvaline Dehydrogenase, domain 2"/>
    <property type="match status" value="1"/>
</dbReference>
<dbReference type="Gene3D" id="3.40.50.720">
    <property type="entry name" value="NAD(P)-binding Rossmann-like Domain"/>
    <property type="match status" value="1"/>
</dbReference>
<dbReference type="HAMAP" id="MF_00394">
    <property type="entry name" value="NAD_Glyc3P_dehydrog"/>
    <property type="match status" value="1"/>
</dbReference>
<dbReference type="InterPro" id="IPR008927">
    <property type="entry name" value="6-PGluconate_DH-like_C_sf"/>
</dbReference>
<dbReference type="InterPro" id="IPR013328">
    <property type="entry name" value="6PGD_dom2"/>
</dbReference>
<dbReference type="InterPro" id="IPR006168">
    <property type="entry name" value="G3P_DH_NAD-dep"/>
</dbReference>
<dbReference type="InterPro" id="IPR006109">
    <property type="entry name" value="G3P_DH_NAD-dep_C"/>
</dbReference>
<dbReference type="InterPro" id="IPR011128">
    <property type="entry name" value="G3P_DH_NAD-dep_N"/>
</dbReference>
<dbReference type="InterPro" id="IPR036291">
    <property type="entry name" value="NAD(P)-bd_dom_sf"/>
</dbReference>
<dbReference type="NCBIfam" id="NF000940">
    <property type="entry name" value="PRK00094.1-2"/>
    <property type="match status" value="1"/>
</dbReference>
<dbReference type="NCBIfam" id="NF000942">
    <property type="entry name" value="PRK00094.1-4"/>
    <property type="match status" value="1"/>
</dbReference>
<dbReference type="PANTHER" id="PTHR11728">
    <property type="entry name" value="GLYCEROL-3-PHOSPHATE DEHYDROGENASE"/>
    <property type="match status" value="1"/>
</dbReference>
<dbReference type="PANTHER" id="PTHR11728:SF1">
    <property type="entry name" value="GLYCEROL-3-PHOSPHATE DEHYDROGENASE [NAD(+)] 2, CHLOROPLASTIC"/>
    <property type="match status" value="1"/>
</dbReference>
<dbReference type="Pfam" id="PF07479">
    <property type="entry name" value="NAD_Gly3P_dh_C"/>
    <property type="match status" value="1"/>
</dbReference>
<dbReference type="Pfam" id="PF01210">
    <property type="entry name" value="NAD_Gly3P_dh_N"/>
    <property type="match status" value="1"/>
</dbReference>
<dbReference type="PIRSF" id="PIRSF000114">
    <property type="entry name" value="Glycerol-3-P_dh"/>
    <property type="match status" value="1"/>
</dbReference>
<dbReference type="PRINTS" id="PR00077">
    <property type="entry name" value="GPDHDRGNASE"/>
</dbReference>
<dbReference type="SUPFAM" id="SSF48179">
    <property type="entry name" value="6-phosphogluconate dehydrogenase C-terminal domain-like"/>
    <property type="match status" value="1"/>
</dbReference>
<dbReference type="SUPFAM" id="SSF51735">
    <property type="entry name" value="NAD(P)-binding Rossmann-fold domains"/>
    <property type="match status" value="1"/>
</dbReference>
<dbReference type="PROSITE" id="PS00957">
    <property type="entry name" value="NAD_G3PDH"/>
    <property type="match status" value="1"/>
</dbReference>
<protein>
    <recommendedName>
        <fullName evidence="1">Glycerol-3-phosphate dehydrogenase [NAD(P)+]</fullName>
        <ecNumber evidence="1">1.1.1.94</ecNumber>
    </recommendedName>
    <alternativeName>
        <fullName evidence="1">NAD(P)(+)-dependent glycerol-3-phosphate dehydrogenase</fullName>
    </alternativeName>
    <alternativeName>
        <fullName evidence="1">NAD(P)H-dependent dihydroxyacetone-phosphate reductase</fullName>
    </alternativeName>
</protein>
<sequence>MNKKTIAMLGAGSWGTAVAIHLAKIGHKTLLWSHNPQHVALMAEQHSNPAYLPGIPFPENLIPSDDLIECVQSADYVIIAVPSHAFAEITNKIPKPTQGLAWLTKGVDPASHQLLSQLVASRFGVDFPIAVISGPSFAKEVARFLPTALTLASNNTNYQKKMHQLFHHDNIRVYLSDDLIGVQLCGAVKNILAIACGISDGLGYGANAKAALITRGLAEMTRLGLSMGARQDTFLGLAGVGDLVLTCTDDQSRNRRFGLLLGREVPIPEAEHQIGQVVEGKHNAAQICAIANKNKVEMPICEQINALLHGIVHAQEAVNNLMSRPAKEE</sequence>
<gene>
    <name evidence="1" type="primary">gpsA</name>
    <name type="ordered locus">LPC_1774</name>
</gene>
<proteinExistence type="inferred from homology"/>
<organism>
    <name type="scientific">Legionella pneumophila (strain Corby)</name>
    <dbReference type="NCBI Taxonomy" id="400673"/>
    <lineage>
        <taxon>Bacteria</taxon>
        <taxon>Pseudomonadati</taxon>
        <taxon>Pseudomonadota</taxon>
        <taxon>Gammaproteobacteria</taxon>
        <taxon>Legionellales</taxon>
        <taxon>Legionellaceae</taxon>
        <taxon>Legionella</taxon>
    </lineage>
</organism>
<feature type="chain" id="PRO_1000049520" description="Glycerol-3-phosphate dehydrogenase [NAD(P)+]">
    <location>
        <begin position="1"/>
        <end position="329"/>
    </location>
</feature>
<feature type="active site" description="Proton acceptor" evidence="1">
    <location>
        <position position="189"/>
    </location>
</feature>
<feature type="binding site" evidence="1">
    <location>
        <position position="13"/>
    </location>
    <ligand>
        <name>NADPH</name>
        <dbReference type="ChEBI" id="CHEBI:57783"/>
    </ligand>
</feature>
<feature type="binding site" evidence="1">
    <location>
        <position position="14"/>
    </location>
    <ligand>
        <name>NADPH</name>
        <dbReference type="ChEBI" id="CHEBI:57783"/>
    </ligand>
</feature>
<feature type="binding site" evidence="1">
    <location>
        <position position="34"/>
    </location>
    <ligand>
        <name>NADPH</name>
        <dbReference type="ChEBI" id="CHEBI:57783"/>
    </ligand>
</feature>
<feature type="binding site" evidence="1">
    <location>
        <position position="105"/>
    </location>
    <ligand>
        <name>NADPH</name>
        <dbReference type="ChEBI" id="CHEBI:57783"/>
    </ligand>
</feature>
<feature type="binding site" evidence="1">
    <location>
        <position position="105"/>
    </location>
    <ligand>
        <name>sn-glycerol 3-phosphate</name>
        <dbReference type="ChEBI" id="CHEBI:57597"/>
    </ligand>
</feature>
<feature type="binding site" evidence="1">
    <location>
        <position position="134"/>
    </location>
    <ligand>
        <name>sn-glycerol 3-phosphate</name>
        <dbReference type="ChEBI" id="CHEBI:57597"/>
    </ligand>
</feature>
<feature type="binding site" evidence="1">
    <location>
        <position position="136"/>
    </location>
    <ligand>
        <name>sn-glycerol 3-phosphate</name>
        <dbReference type="ChEBI" id="CHEBI:57597"/>
    </ligand>
</feature>
<feature type="binding site" evidence="1">
    <location>
        <position position="138"/>
    </location>
    <ligand>
        <name>NADPH</name>
        <dbReference type="ChEBI" id="CHEBI:57783"/>
    </ligand>
</feature>
<feature type="binding site" evidence="1">
    <location>
        <position position="189"/>
    </location>
    <ligand>
        <name>sn-glycerol 3-phosphate</name>
        <dbReference type="ChEBI" id="CHEBI:57597"/>
    </ligand>
</feature>
<feature type="binding site" evidence="1">
    <location>
        <position position="242"/>
    </location>
    <ligand>
        <name>sn-glycerol 3-phosphate</name>
        <dbReference type="ChEBI" id="CHEBI:57597"/>
    </ligand>
</feature>
<feature type="binding site" evidence="1">
    <location>
        <position position="252"/>
    </location>
    <ligand>
        <name>sn-glycerol 3-phosphate</name>
        <dbReference type="ChEBI" id="CHEBI:57597"/>
    </ligand>
</feature>
<feature type="binding site" evidence="1">
    <location>
        <position position="253"/>
    </location>
    <ligand>
        <name>NADPH</name>
        <dbReference type="ChEBI" id="CHEBI:57783"/>
    </ligand>
</feature>
<feature type="binding site" evidence="1">
    <location>
        <position position="253"/>
    </location>
    <ligand>
        <name>sn-glycerol 3-phosphate</name>
        <dbReference type="ChEBI" id="CHEBI:57597"/>
    </ligand>
</feature>
<feature type="binding site" evidence="1">
    <location>
        <position position="254"/>
    </location>
    <ligand>
        <name>sn-glycerol 3-phosphate</name>
        <dbReference type="ChEBI" id="CHEBI:57597"/>
    </ligand>
</feature>
<feature type="binding site" evidence="1">
    <location>
        <position position="277"/>
    </location>
    <ligand>
        <name>NADPH</name>
        <dbReference type="ChEBI" id="CHEBI:57783"/>
    </ligand>
</feature>
<feature type="binding site" evidence="1">
    <location>
        <position position="279"/>
    </location>
    <ligand>
        <name>NADPH</name>
        <dbReference type="ChEBI" id="CHEBI:57783"/>
    </ligand>
</feature>
<name>GPDA_LEGPC</name>
<evidence type="ECO:0000255" key="1">
    <source>
        <dbReference type="HAMAP-Rule" id="MF_00394"/>
    </source>
</evidence>
<keyword id="KW-0963">Cytoplasm</keyword>
<keyword id="KW-0444">Lipid biosynthesis</keyword>
<keyword id="KW-0443">Lipid metabolism</keyword>
<keyword id="KW-0520">NAD</keyword>
<keyword id="KW-0521">NADP</keyword>
<keyword id="KW-0547">Nucleotide-binding</keyword>
<keyword id="KW-0560">Oxidoreductase</keyword>
<keyword id="KW-0594">Phospholipid biosynthesis</keyword>
<keyword id="KW-1208">Phospholipid metabolism</keyword>
<comment type="function">
    <text evidence="1">Catalyzes the reduction of the glycolytic intermediate dihydroxyacetone phosphate (DHAP) to sn-glycerol 3-phosphate (G3P), the key precursor for phospholipid synthesis.</text>
</comment>
<comment type="catalytic activity">
    <reaction evidence="1">
        <text>sn-glycerol 3-phosphate + NAD(+) = dihydroxyacetone phosphate + NADH + H(+)</text>
        <dbReference type="Rhea" id="RHEA:11092"/>
        <dbReference type="ChEBI" id="CHEBI:15378"/>
        <dbReference type="ChEBI" id="CHEBI:57540"/>
        <dbReference type="ChEBI" id="CHEBI:57597"/>
        <dbReference type="ChEBI" id="CHEBI:57642"/>
        <dbReference type="ChEBI" id="CHEBI:57945"/>
        <dbReference type="EC" id="1.1.1.94"/>
    </reaction>
    <physiologicalReaction direction="right-to-left" evidence="1">
        <dbReference type="Rhea" id="RHEA:11094"/>
    </physiologicalReaction>
</comment>
<comment type="catalytic activity">
    <reaction evidence="1">
        <text>sn-glycerol 3-phosphate + NADP(+) = dihydroxyacetone phosphate + NADPH + H(+)</text>
        <dbReference type="Rhea" id="RHEA:11096"/>
        <dbReference type="ChEBI" id="CHEBI:15378"/>
        <dbReference type="ChEBI" id="CHEBI:57597"/>
        <dbReference type="ChEBI" id="CHEBI:57642"/>
        <dbReference type="ChEBI" id="CHEBI:57783"/>
        <dbReference type="ChEBI" id="CHEBI:58349"/>
        <dbReference type="EC" id="1.1.1.94"/>
    </reaction>
    <physiologicalReaction direction="right-to-left" evidence="1">
        <dbReference type="Rhea" id="RHEA:11098"/>
    </physiologicalReaction>
</comment>
<comment type="pathway">
    <text evidence="1">Membrane lipid metabolism; glycerophospholipid metabolism.</text>
</comment>
<comment type="subcellular location">
    <subcellularLocation>
        <location evidence="1">Cytoplasm</location>
    </subcellularLocation>
</comment>
<comment type="similarity">
    <text evidence="1">Belongs to the NAD-dependent glycerol-3-phosphate dehydrogenase family.</text>
</comment>